<comment type="function">
    <text evidence="1">Destroys superoxide anion radicals which are normally produced within the cells and which are toxic to biological systems. Catalyzes the dismutation of superoxide anion radicals into O2 and H2O2 by successive reduction and oxidation of the transition metal ion at the active site.</text>
</comment>
<comment type="catalytic activity">
    <reaction evidence="1">
        <text>2 superoxide + 2 H(+) = H2O2 + O2</text>
        <dbReference type="Rhea" id="RHEA:20696"/>
        <dbReference type="ChEBI" id="CHEBI:15378"/>
        <dbReference type="ChEBI" id="CHEBI:15379"/>
        <dbReference type="ChEBI" id="CHEBI:16240"/>
        <dbReference type="ChEBI" id="CHEBI:18421"/>
        <dbReference type="EC" id="1.15.1.1"/>
    </reaction>
    <physiologicalReaction direction="left-to-right" evidence="1">
        <dbReference type="Rhea" id="RHEA:20697"/>
    </physiologicalReaction>
</comment>
<comment type="cofactor">
    <cofactor evidence="1">
        <name>Mn(2+)</name>
        <dbReference type="ChEBI" id="CHEBI:29035"/>
    </cofactor>
    <cofactor evidence="1">
        <name>Fe(3+)</name>
        <dbReference type="ChEBI" id="CHEBI:29034"/>
    </cofactor>
    <text evidence="1">Binds 1 Mn(2+) or Fe(3+) ion per subunit.</text>
</comment>
<comment type="similarity">
    <text evidence="2">Belongs to the iron/manganese superoxide dismutase family.</text>
</comment>
<organism>
    <name type="scientific">Streptococcus parasanguinis</name>
    <dbReference type="NCBI Taxonomy" id="1318"/>
    <lineage>
        <taxon>Bacteria</taxon>
        <taxon>Bacillati</taxon>
        <taxon>Bacillota</taxon>
        <taxon>Bacilli</taxon>
        <taxon>Lactobacillales</taxon>
        <taxon>Streptococcaceae</taxon>
        <taxon>Streptococcus</taxon>
    </lineage>
</organism>
<gene>
    <name type="primary">sodA</name>
</gene>
<evidence type="ECO:0000250" key="1">
    <source>
        <dbReference type="UniProtKB" id="P80293"/>
    </source>
</evidence>
<evidence type="ECO:0000305" key="2"/>
<reference key="1">
    <citation type="journal article" date="1998" name="J. Clin. Microbiol.">
        <title>Identification of streptococci to species level by sequencing the gene encoding the manganese-dependent superoxide dismutase.</title>
        <authorList>
            <person name="Poyart C."/>
            <person name="Quesne G."/>
            <person name="Coulon S."/>
            <person name="Berche P."/>
            <person name="Trieu-Cuot P."/>
        </authorList>
    </citation>
    <scope>NUCLEOTIDE SEQUENCE [GENOMIC DNA]</scope>
    <source>
        <strain>ATCC 15912 / CIP 104372 / DSM 6778 / LMG 14537 / SS 898</strain>
        <strain>NEM895</strain>
    </source>
</reference>
<accession>O33756</accession>
<accession>O54267</accession>
<sequence length="145" mass="15751">YIDEETMHLHHDKHHQTYVNNVNAALEKHPEIGEDLESLLADVESIPADIRQAVINNGGGHLNHALFWELMTPEQTAPSAELAAAIDATFGSFEDFKAAFTAAATTRFGSGWAWSVVNKEGKLEVTSTANQDTPLSEGKTPILGL</sequence>
<proteinExistence type="inferred from homology"/>
<dbReference type="EC" id="1.15.1.1" evidence="1"/>
<dbReference type="EMBL" id="Z95913">
    <property type="protein sequence ID" value="CAB09366.1"/>
    <property type="molecule type" value="Genomic_DNA"/>
</dbReference>
<dbReference type="EMBL" id="Z99196">
    <property type="protein sequence ID" value="CAB16340.1"/>
    <property type="molecule type" value="Genomic_DNA"/>
</dbReference>
<dbReference type="SMR" id="O33756"/>
<dbReference type="GO" id="GO:0005737">
    <property type="term" value="C:cytoplasm"/>
    <property type="evidence" value="ECO:0007669"/>
    <property type="project" value="TreeGrafter"/>
</dbReference>
<dbReference type="GO" id="GO:0046872">
    <property type="term" value="F:metal ion binding"/>
    <property type="evidence" value="ECO:0007669"/>
    <property type="project" value="UniProtKB-KW"/>
</dbReference>
<dbReference type="GO" id="GO:0004784">
    <property type="term" value="F:superoxide dismutase activity"/>
    <property type="evidence" value="ECO:0007669"/>
    <property type="project" value="UniProtKB-EC"/>
</dbReference>
<dbReference type="FunFam" id="1.10.287.990:FF:000001">
    <property type="entry name" value="Superoxide dismutase"/>
    <property type="match status" value="1"/>
</dbReference>
<dbReference type="Gene3D" id="1.10.287.990">
    <property type="entry name" value="Fe,Mn superoxide dismutase (SOD) domain"/>
    <property type="match status" value="1"/>
</dbReference>
<dbReference type="Gene3D" id="3.55.40.20">
    <property type="entry name" value="Iron/manganese superoxide dismutase, C-terminal domain"/>
    <property type="match status" value="1"/>
</dbReference>
<dbReference type="InterPro" id="IPR001189">
    <property type="entry name" value="Mn/Fe_SOD"/>
</dbReference>
<dbReference type="InterPro" id="IPR019832">
    <property type="entry name" value="Mn/Fe_SOD_C"/>
</dbReference>
<dbReference type="InterPro" id="IPR019831">
    <property type="entry name" value="Mn/Fe_SOD_N"/>
</dbReference>
<dbReference type="InterPro" id="IPR036324">
    <property type="entry name" value="Mn/Fe_SOD_N_sf"/>
</dbReference>
<dbReference type="InterPro" id="IPR036314">
    <property type="entry name" value="SOD_C_sf"/>
</dbReference>
<dbReference type="PANTHER" id="PTHR43595">
    <property type="entry name" value="37S RIBOSOMAL PROTEIN S26, MITOCHONDRIAL"/>
    <property type="match status" value="1"/>
</dbReference>
<dbReference type="PANTHER" id="PTHR43595:SF2">
    <property type="entry name" value="SMALL RIBOSOMAL SUBUNIT PROTEIN MS42"/>
    <property type="match status" value="1"/>
</dbReference>
<dbReference type="Pfam" id="PF02777">
    <property type="entry name" value="Sod_Fe_C"/>
    <property type="match status" value="1"/>
</dbReference>
<dbReference type="Pfam" id="PF00081">
    <property type="entry name" value="Sod_Fe_N"/>
    <property type="match status" value="1"/>
</dbReference>
<dbReference type="PRINTS" id="PR01703">
    <property type="entry name" value="MNSODISMTASE"/>
</dbReference>
<dbReference type="SUPFAM" id="SSF54719">
    <property type="entry name" value="Fe,Mn superoxide dismutase (SOD), C-terminal domain"/>
    <property type="match status" value="1"/>
</dbReference>
<dbReference type="SUPFAM" id="SSF46609">
    <property type="entry name" value="Fe,Mn superoxide dismutase (SOD), N-terminal domain"/>
    <property type="match status" value="1"/>
</dbReference>
<feature type="chain" id="PRO_0000160096" description="Superoxide dismutase [Mn/Fe]">
    <location>
        <begin position="1" status="less than"/>
        <end position="145" status="greater than"/>
    </location>
</feature>
<feature type="binding site" evidence="1">
    <location>
        <position position="10"/>
    </location>
    <ligand>
        <name>Fe(3+)</name>
        <dbReference type="ChEBI" id="CHEBI:29034"/>
    </ligand>
</feature>
<feature type="binding site" evidence="1">
    <location>
        <position position="10"/>
    </location>
    <ligand>
        <name>Mn(2+)</name>
        <dbReference type="ChEBI" id="CHEBI:29035"/>
    </ligand>
</feature>
<feature type="binding site" evidence="1">
    <location>
        <position position="64"/>
    </location>
    <ligand>
        <name>Fe(3+)</name>
        <dbReference type="ChEBI" id="CHEBI:29034"/>
    </ligand>
</feature>
<feature type="binding site" evidence="1">
    <location>
        <position position="64"/>
    </location>
    <ligand>
        <name>Mn(2+)</name>
        <dbReference type="ChEBI" id="CHEBI:29035"/>
    </ligand>
</feature>
<feature type="sequence variant" description="In strain: NEM895.">
    <original>S</original>
    <variation>L</variation>
    <location>
        <position position="115"/>
    </location>
</feature>
<feature type="sequence variant" description="In strain: NEM895.">
    <original>L</original>
    <variation>I</variation>
    <location>
        <position position="135"/>
    </location>
</feature>
<feature type="non-terminal residue">
    <location>
        <position position="1"/>
    </location>
</feature>
<feature type="non-terminal residue">
    <location>
        <position position="145"/>
    </location>
</feature>
<protein>
    <recommendedName>
        <fullName>Superoxide dismutase [Mn/Fe]</fullName>
        <ecNumber evidence="1">1.15.1.1</ecNumber>
    </recommendedName>
</protein>
<name>SODM_STRPA</name>
<keyword id="KW-0408">Iron</keyword>
<keyword id="KW-0464">Manganese</keyword>
<keyword id="KW-0479">Metal-binding</keyword>
<keyword id="KW-0560">Oxidoreductase</keyword>